<proteinExistence type="evidence at protein level"/>
<evidence type="ECO:0000250" key="1">
    <source>
        <dbReference type="UniProtKB" id="O34974"/>
    </source>
</evidence>
<evidence type="ECO:0000256" key="2">
    <source>
        <dbReference type="SAM" id="MobiDB-lite"/>
    </source>
</evidence>
<evidence type="ECO:0000269" key="3">
    <source>
    </source>
</evidence>
<evidence type="ECO:0000305" key="4"/>
<evidence type="ECO:0000305" key="5">
    <source>
    </source>
</evidence>
<evidence type="ECO:0007829" key="6">
    <source>
        <dbReference type="PDB" id="6AK1"/>
    </source>
</evidence>
<comment type="function">
    <text evidence="3">Monooxygenase that mediates oxidation of dimethyl sulfide, the first step in dimethyl sulfide degradation pathway. Has much lower activity with diethyl sulfide and other short-chain alkyl methyl sulfides.</text>
</comment>
<comment type="catalytic activity">
    <reaction evidence="3">
        <text>dimethyl sulfide + NADH + O2 + H(+) = methanethiol + formaldehyde + NAD(+) + H2O</text>
        <dbReference type="Rhea" id="RHEA:31355"/>
        <dbReference type="ChEBI" id="CHEBI:15377"/>
        <dbReference type="ChEBI" id="CHEBI:15378"/>
        <dbReference type="ChEBI" id="CHEBI:15379"/>
        <dbReference type="ChEBI" id="CHEBI:16007"/>
        <dbReference type="ChEBI" id="CHEBI:16842"/>
        <dbReference type="ChEBI" id="CHEBI:17437"/>
        <dbReference type="ChEBI" id="CHEBI:57540"/>
        <dbReference type="ChEBI" id="CHEBI:57945"/>
        <dbReference type="EC" id="1.14.13.131"/>
    </reaction>
</comment>
<comment type="cofactor">
    <cofactor evidence="3">
        <name>FMN</name>
        <dbReference type="ChEBI" id="CHEBI:58210"/>
    </cofactor>
</comment>
<comment type="activity regulation">
    <text evidence="3">Inhibited by umbelliferone, 8-anilinonaphthalenesulfonate, a range of metal-chelating agents, and Hg(2+), Cd(2+) and Pb(2+) ions.</text>
</comment>
<comment type="biophysicochemical properties">
    <kinetics>
        <KM>17.2 uM for Dimethyl sulfide</KM>
        <Vmax>1.25 umol/min/mg enzyme</Vmax>
    </kinetics>
</comment>
<comment type="subunit">
    <text evidence="3">Heterodimer of 2 subunits, DmoA and DmoB.</text>
</comment>
<comment type="miscellaneous">
    <text evidence="5">DmoB has not been identified yet. Only a peptide from the protein encoded by a putative flavin reductase (AC E0XCR3) was obtained by mass spectrometry, which is insufficient for linking this gene to DmoB (PubMed:21216999).</text>
</comment>
<comment type="similarity">
    <text evidence="4">Belongs to the NtaA/SnaA/DszA monooxygenase family.</text>
</comment>
<sequence>MKKRIVLNAFDMTCVSHQSAGTWRHPSSQAARYNDLEYWTNMAMELERGCFDCLFIADVVGVYDVYRGSAEMALRDADQVPVNDPFGAISAMAAVTEHVGFGVTAAITFEQPYLLARRLSTLDHLTKGRVAWNVVSSYLNSAALNIGMDQQLAHDERYEMADEYMEVMYKLWEGSWEDDAVKRDKKSGVFTDGSKVHPINHQGKYYKVPGFHICEPSPQRTPVIFQAGASGRGSKFAASNAEGMFILTTSVEQARQITTDIRNQAEAAGRSRDSIKIFMLLTVITGDSDEAAEAKYQEYLSYANPEGMLALYGGWTGIDFAKLDPDEPLQAMENDSLRTTLESLTHGENAKKWTVRDVIRERCIGGLGPVLVGGPQKVADELERWVDEGGVDGFNLAYAVTPGSVTDFIDYIVPELRKRGRAQDSYKPGSLRRKLIGTNDGRVESTHPAAQYRDAYVGKESVADRTQPSPFANAKAPVAE</sequence>
<reference key="1">
    <citation type="journal article" date="2011" name="J. Bacteriol.">
        <title>Purification and characterization of dimethylsulfide monooxygenase from Hyphomicrobium sulfonivorans.</title>
        <authorList>
            <person name="Boden R."/>
            <person name="Borodina E."/>
            <person name="Wood A.P."/>
            <person name="Kelly D.P."/>
            <person name="Murrell J.C."/>
            <person name="Schafer H."/>
        </authorList>
    </citation>
    <scope>NUCLEOTIDE SEQUENCE [GENOMIC DNA]</scope>
    <scope>FUNCTION</scope>
    <scope>CATALYTIC ACTIVITY</scope>
    <scope>SUBUNIT</scope>
    <scope>COFACTOR</scope>
    <scope>ACTIVITY REGULATION</scope>
    <source>
        <strain>ATCC BAA-113 / DSM 13863 / S1</strain>
    </source>
</reference>
<gene>
    <name type="primary">dmoA</name>
</gene>
<feature type="chain" id="PRO_0000418929" description="Dimethyl-sulfide monooxygenase">
    <location>
        <begin position="1"/>
        <end position="480"/>
    </location>
</feature>
<feature type="region of interest" description="Disordered" evidence="2">
    <location>
        <begin position="423"/>
        <end position="480"/>
    </location>
</feature>
<feature type="binding site" evidence="1">
    <location>
        <position position="58"/>
    </location>
    <ligand>
        <name>FMN</name>
        <dbReference type="ChEBI" id="CHEBI:58210"/>
    </ligand>
</feature>
<feature type="binding site" evidence="1">
    <location>
        <position position="104"/>
    </location>
    <ligand>
        <name>FMN</name>
        <dbReference type="ChEBI" id="CHEBI:58210"/>
    </ligand>
</feature>
<feature type="binding site" evidence="1">
    <location>
        <position position="154"/>
    </location>
    <ligand>
        <name>FMN</name>
        <dbReference type="ChEBI" id="CHEBI:58210"/>
    </ligand>
</feature>
<feature type="binding site" evidence="1">
    <location>
        <position position="158"/>
    </location>
    <ligand>
        <name>FMN</name>
        <dbReference type="ChEBI" id="CHEBI:58210"/>
    </ligand>
</feature>
<feature type="binding site" evidence="1">
    <location>
        <position position="230"/>
    </location>
    <ligand>
        <name>FMN</name>
        <dbReference type="ChEBI" id="CHEBI:58210"/>
    </ligand>
</feature>
<feature type="strand" evidence="6">
    <location>
        <begin position="6"/>
        <end position="21"/>
    </location>
</feature>
<feature type="helix" evidence="6">
    <location>
        <begin position="22"/>
        <end position="24"/>
    </location>
</feature>
<feature type="helix" evidence="6">
    <location>
        <begin position="30"/>
        <end position="32"/>
    </location>
</feature>
<feature type="helix" evidence="6">
    <location>
        <begin position="36"/>
        <end position="48"/>
    </location>
</feature>
<feature type="strand" evidence="6">
    <location>
        <begin position="52"/>
        <end position="57"/>
    </location>
</feature>
<feature type="helix" evidence="6">
    <location>
        <begin position="66"/>
        <end position="68"/>
    </location>
</feature>
<feature type="helix" evidence="6">
    <location>
        <begin position="71"/>
        <end position="75"/>
    </location>
</feature>
<feature type="turn" evidence="6">
    <location>
        <begin position="85"/>
        <end position="88"/>
    </location>
</feature>
<feature type="helix" evidence="6">
    <location>
        <begin position="89"/>
        <end position="94"/>
    </location>
</feature>
<feature type="strand" evidence="6">
    <location>
        <begin position="100"/>
        <end position="106"/>
    </location>
</feature>
<feature type="turn" evidence="6">
    <location>
        <begin position="107"/>
        <end position="109"/>
    </location>
</feature>
<feature type="helix" evidence="6">
    <location>
        <begin position="112"/>
        <end position="126"/>
    </location>
</feature>
<feature type="strand" evidence="6">
    <location>
        <begin position="130"/>
        <end position="135"/>
    </location>
</feature>
<feature type="helix" evidence="6">
    <location>
        <begin position="140"/>
        <end position="146"/>
    </location>
</feature>
<feature type="helix" evidence="6">
    <location>
        <begin position="154"/>
        <end position="156"/>
    </location>
</feature>
<feature type="helix" evidence="6">
    <location>
        <begin position="157"/>
        <end position="173"/>
    </location>
</feature>
<feature type="strand" evidence="6">
    <location>
        <begin position="180"/>
        <end position="184"/>
    </location>
</feature>
<feature type="turn" evidence="6">
    <location>
        <begin position="185"/>
        <end position="188"/>
    </location>
</feature>
<feature type="strand" evidence="6">
    <location>
        <begin position="189"/>
        <end position="191"/>
    </location>
</feature>
<feature type="strand" evidence="6">
    <location>
        <begin position="218"/>
        <end position="221"/>
    </location>
</feature>
<feature type="strand" evidence="6">
    <location>
        <begin position="223"/>
        <end position="227"/>
    </location>
</feature>
<feature type="helix" evidence="6">
    <location>
        <begin position="232"/>
        <end position="240"/>
    </location>
</feature>
<feature type="strand" evidence="6">
    <location>
        <begin position="242"/>
        <end position="246"/>
    </location>
</feature>
<feature type="helix" evidence="6">
    <location>
        <begin position="251"/>
        <end position="267"/>
    </location>
</feature>
<feature type="strand" evidence="6">
    <location>
        <begin position="274"/>
        <end position="284"/>
    </location>
</feature>
<feature type="helix" evidence="6">
    <location>
        <begin position="289"/>
        <end position="300"/>
    </location>
</feature>
<feature type="helix" evidence="6">
    <location>
        <begin position="305"/>
        <end position="316"/>
    </location>
</feature>
<feature type="helix" evidence="6">
    <location>
        <begin position="320"/>
        <end position="322"/>
    </location>
</feature>
<feature type="helix" evidence="6">
    <location>
        <begin position="329"/>
        <end position="331"/>
    </location>
</feature>
<feature type="helix" evidence="6">
    <location>
        <begin position="335"/>
        <end position="344"/>
    </location>
</feature>
<feature type="helix" evidence="6">
    <location>
        <begin position="355"/>
        <end position="362"/>
    </location>
</feature>
<feature type="turn" evidence="6">
    <location>
        <begin position="363"/>
        <end position="367"/>
    </location>
</feature>
<feature type="strand" evidence="6">
    <location>
        <begin position="370"/>
        <end position="372"/>
    </location>
</feature>
<feature type="helix" evidence="6">
    <location>
        <begin position="375"/>
        <end position="387"/>
    </location>
</feature>
<feature type="strand" evidence="6">
    <location>
        <begin position="393"/>
        <end position="397"/>
    </location>
</feature>
<feature type="helix" evidence="6">
    <location>
        <begin position="403"/>
        <end position="411"/>
    </location>
</feature>
<feature type="helix" evidence="6">
    <location>
        <begin position="413"/>
        <end position="418"/>
    </location>
</feature>
<feature type="helix" evidence="6">
    <location>
        <begin position="431"/>
        <end position="435"/>
    </location>
</feature>
<feature type="helix" evidence="6">
    <location>
        <begin position="448"/>
        <end position="452"/>
    </location>
</feature>
<feature type="turn" evidence="6">
    <location>
        <begin position="453"/>
        <end position="458"/>
    </location>
</feature>
<feature type="helix" evidence="6">
    <location>
        <begin position="463"/>
        <end position="465"/>
    </location>
</feature>
<keyword id="KW-0002">3D-structure</keyword>
<keyword id="KW-0285">Flavoprotein</keyword>
<keyword id="KW-0288">FMN</keyword>
<keyword id="KW-0503">Monooxygenase</keyword>
<keyword id="KW-0520">NAD</keyword>
<keyword id="KW-0560">Oxidoreductase</keyword>
<dbReference type="EC" id="1.14.13.131"/>
<dbReference type="EMBL" id="GQ980036">
    <property type="protein sequence ID" value="ADU77278.1"/>
    <property type="molecule type" value="Genomic_DNA"/>
</dbReference>
<dbReference type="PDB" id="6AK1">
    <property type="method" value="X-ray"/>
    <property type="resolution" value="2.28 A"/>
    <property type="chains" value="A/B=1-480"/>
</dbReference>
<dbReference type="PDBsum" id="6AK1"/>
<dbReference type="SMR" id="E9JFX9"/>
<dbReference type="STRING" id="121290.APY04_0470"/>
<dbReference type="KEGG" id="ag:ADU77278"/>
<dbReference type="BioCyc" id="MetaCyc:MONOMER-16507"/>
<dbReference type="BRENDA" id="1.14.13.131">
    <property type="organism ID" value="12611"/>
</dbReference>
<dbReference type="GO" id="GO:0018633">
    <property type="term" value="F:dimethyl sulfide monooxygenase activity"/>
    <property type="evidence" value="ECO:0000314"/>
    <property type="project" value="CACAO"/>
</dbReference>
<dbReference type="CDD" id="cd01095">
    <property type="entry name" value="Nitrilotriacetate_monoxgenase"/>
    <property type="match status" value="1"/>
</dbReference>
<dbReference type="FunFam" id="3.20.20.30:FF:000008">
    <property type="entry name" value="Xenobiotic compound monooxygenase A subunit"/>
    <property type="match status" value="1"/>
</dbReference>
<dbReference type="Gene3D" id="3.20.20.30">
    <property type="entry name" value="Luciferase-like domain"/>
    <property type="match status" value="1"/>
</dbReference>
<dbReference type="InterPro" id="IPR051260">
    <property type="entry name" value="Diverse_substr_monoxygenases"/>
</dbReference>
<dbReference type="InterPro" id="IPR011251">
    <property type="entry name" value="Luciferase-like_dom"/>
</dbReference>
<dbReference type="InterPro" id="IPR036661">
    <property type="entry name" value="Luciferase-like_sf"/>
</dbReference>
<dbReference type="InterPro" id="IPR016215">
    <property type="entry name" value="NTA_MOA"/>
</dbReference>
<dbReference type="NCBIfam" id="TIGR03860">
    <property type="entry name" value="FMN_nitrolo"/>
    <property type="match status" value="1"/>
</dbReference>
<dbReference type="PANTHER" id="PTHR30011">
    <property type="entry name" value="ALKANESULFONATE MONOOXYGENASE-RELATED"/>
    <property type="match status" value="1"/>
</dbReference>
<dbReference type="PANTHER" id="PTHR30011:SF16">
    <property type="entry name" value="C2H2 FINGER DOMAIN TRANSCRIPTION FACTOR (EUROFUNG)-RELATED"/>
    <property type="match status" value="1"/>
</dbReference>
<dbReference type="Pfam" id="PF00296">
    <property type="entry name" value="Bac_luciferase"/>
    <property type="match status" value="1"/>
</dbReference>
<dbReference type="PIRSF" id="PIRSF000337">
    <property type="entry name" value="NTA_MOA"/>
    <property type="match status" value="1"/>
</dbReference>
<dbReference type="SUPFAM" id="SSF51679">
    <property type="entry name" value="Bacterial luciferase-like"/>
    <property type="match status" value="1"/>
</dbReference>
<accession>E9JFX9</accession>
<protein>
    <recommendedName>
        <fullName>Dimethyl-sulfide monooxygenase</fullName>
        <ecNumber>1.14.13.131</ecNumber>
    </recommendedName>
    <alternativeName>
        <fullName>Dimethylsulfide monooxygenase large subunit</fullName>
    </alternativeName>
</protein>
<name>DMOA_HYPSL</name>
<organism>
    <name type="scientific">Hyphomicrobium sulfonivorans</name>
    <dbReference type="NCBI Taxonomy" id="121290"/>
    <lineage>
        <taxon>Bacteria</taxon>
        <taxon>Pseudomonadati</taxon>
        <taxon>Pseudomonadota</taxon>
        <taxon>Alphaproteobacteria</taxon>
        <taxon>Hyphomicrobiales</taxon>
        <taxon>Hyphomicrobiaceae</taxon>
        <taxon>Hyphomicrobium</taxon>
    </lineage>
</organism>